<dbReference type="EMBL" id="M99657">
    <property type="status" value="NOT_ANNOTATED_CDS"/>
    <property type="molecule type" value="Genomic_DNA"/>
</dbReference>
<dbReference type="EMBL" id="AC245166">
    <property type="status" value="NOT_ANNOTATED_CDS"/>
    <property type="molecule type" value="Genomic_DNA"/>
</dbReference>
<dbReference type="SMR" id="A0A0C4DH32"/>
<dbReference type="FunCoup" id="A0A0C4DH32">
    <property type="interactions" value="322"/>
</dbReference>
<dbReference type="IMGT_GENE-DB" id="IGHV3-20"/>
<dbReference type="GlyGen" id="A0A0C4DH32">
    <property type="glycosylation" value="1 site, 1 O-linked glycan (1 site)"/>
</dbReference>
<dbReference type="BioMuta" id="IGHV3-20"/>
<dbReference type="jPOST" id="A0A0C4DH32"/>
<dbReference type="MassIVE" id="A0A0C4DH32"/>
<dbReference type="PRIDE" id="A0A0C4DH32"/>
<dbReference type="Ensembl" id="ENST00000390606.3">
    <property type="protein sequence ID" value="ENSP00000375015.2"/>
    <property type="gene ID" value="ENSG00000211946.3"/>
</dbReference>
<dbReference type="Ensembl" id="ENST00000632076.1">
    <property type="protein sequence ID" value="ENSP00000488747.1"/>
    <property type="gene ID" value="ENSG00000282476.1"/>
</dbReference>
<dbReference type="AGR" id="HGNC:5585"/>
<dbReference type="GeneCards" id="IGHV3-20"/>
<dbReference type="HGNC" id="HGNC:5585">
    <property type="gene designation" value="IGHV3-20"/>
</dbReference>
<dbReference type="HPA" id="ENSG00000211946">
    <property type="expression patterns" value="Tissue enhanced (intestine, lymphoid tissue, stomach, urinary bladder)"/>
</dbReference>
<dbReference type="neXtProt" id="NX_A0A0C4DH32"/>
<dbReference type="VEuPathDB" id="HostDB:ENSG00000211946"/>
<dbReference type="HOGENOM" id="CLU_077975_5_2_1"/>
<dbReference type="InParanoid" id="A0A0C4DH32"/>
<dbReference type="OrthoDB" id="9945861at2759"/>
<dbReference type="PAN-GO" id="A0A0C4DH32">
    <property type="GO annotations" value="11 GO annotations based on evolutionary models"/>
</dbReference>
<dbReference type="PhylomeDB" id="A0A0C4DH32"/>
<dbReference type="SignaLink" id="A0A0C4DH32"/>
<dbReference type="ChiTaRS" id="IGHV3-20">
    <property type="organism name" value="human"/>
</dbReference>
<dbReference type="Pharos" id="A0A0C4DH32">
    <property type="development level" value="Tdark"/>
</dbReference>
<dbReference type="PRO" id="PR:A0A0C4DH32"/>
<dbReference type="Proteomes" id="UP000005640">
    <property type="component" value="Chromosome 14"/>
</dbReference>
<dbReference type="RNAct" id="A0A0C4DH32">
    <property type="molecule type" value="protein"/>
</dbReference>
<dbReference type="Bgee" id="ENSG00000211946">
    <property type="expression patterns" value="Expressed in duodenum and 94 other cell types or tissues"/>
</dbReference>
<dbReference type="GO" id="GO:0005576">
    <property type="term" value="C:extracellular region"/>
    <property type="evidence" value="ECO:0007669"/>
    <property type="project" value="UniProtKB-SubCell"/>
</dbReference>
<dbReference type="GO" id="GO:0019814">
    <property type="term" value="C:immunoglobulin complex"/>
    <property type="evidence" value="ECO:0007669"/>
    <property type="project" value="UniProtKB-KW"/>
</dbReference>
<dbReference type="GO" id="GO:0005886">
    <property type="term" value="C:plasma membrane"/>
    <property type="evidence" value="ECO:0007669"/>
    <property type="project" value="UniProtKB-SubCell"/>
</dbReference>
<dbReference type="GO" id="GO:0003823">
    <property type="term" value="F:antigen binding"/>
    <property type="evidence" value="ECO:0000318"/>
    <property type="project" value="GO_Central"/>
</dbReference>
<dbReference type="GO" id="GO:0016064">
    <property type="term" value="P:immunoglobulin mediated immune response"/>
    <property type="evidence" value="ECO:0000318"/>
    <property type="project" value="GO_Central"/>
</dbReference>
<dbReference type="FunFam" id="2.60.40.10:FF:001142">
    <property type="entry name" value="Immunoglobulin heavy variable 5-15"/>
    <property type="match status" value="1"/>
</dbReference>
<dbReference type="Gene3D" id="2.60.40.10">
    <property type="entry name" value="Immunoglobulins"/>
    <property type="match status" value="1"/>
</dbReference>
<dbReference type="InterPro" id="IPR007110">
    <property type="entry name" value="Ig-like_dom"/>
</dbReference>
<dbReference type="InterPro" id="IPR036179">
    <property type="entry name" value="Ig-like_dom_sf"/>
</dbReference>
<dbReference type="InterPro" id="IPR013783">
    <property type="entry name" value="Ig-like_fold"/>
</dbReference>
<dbReference type="InterPro" id="IPR013106">
    <property type="entry name" value="Ig_V-set"/>
</dbReference>
<dbReference type="InterPro" id="IPR050199">
    <property type="entry name" value="IgHV"/>
</dbReference>
<dbReference type="PANTHER" id="PTHR23266">
    <property type="entry name" value="IMMUNOGLOBULIN HEAVY CHAIN"/>
    <property type="match status" value="1"/>
</dbReference>
<dbReference type="Pfam" id="PF07686">
    <property type="entry name" value="V-set"/>
    <property type="match status" value="1"/>
</dbReference>
<dbReference type="SMART" id="SM00406">
    <property type="entry name" value="IGv"/>
    <property type="match status" value="1"/>
</dbReference>
<dbReference type="SUPFAM" id="SSF48726">
    <property type="entry name" value="Immunoglobulin"/>
    <property type="match status" value="1"/>
</dbReference>
<dbReference type="PROSITE" id="PS50835">
    <property type="entry name" value="IG_LIKE"/>
    <property type="match status" value="1"/>
</dbReference>
<reference key="1">
    <citation type="journal article" date="1993" name="Nat. Genet.">
        <title>Structure and physical map of 64 variable segments in the 3'0.8-megabase region of the human immunoglobulin heavy-chain locus.</title>
        <authorList>
            <person name="Matsuda F."/>
            <person name="Shin E.K."/>
            <person name="Nagaoka H."/>
            <person name="Matsumura R."/>
            <person name="Haino M."/>
            <person name="Fukita Y."/>
            <person name="Taka-ishi S."/>
            <person name="Imai T."/>
            <person name="Riley J.H."/>
            <person name="Anand R."/>
        </authorList>
    </citation>
    <scope>NUCLEOTIDE SEQUENCE [GENOMIC DNA] (IMGT ALLELE IGHV3-20*01)</scope>
</reference>
<reference key="2">
    <citation type="journal article" date="2003" name="Nature">
        <title>The DNA sequence and analysis of human chromosome 14.</title>
        <authorList>
            <person name="Heilig R."/>
            <person name="Eckenberg R."/>
            <person name="Petit J.-L."/>
            <person name="Fonknechten N."/>
            <person name="Da Silva C."/>
            <person name="Cattolico L."/>
            <person name="Levy M."/>
            <person name="Barbe V."/>
            <person name="De Berardinis V."/>
            <person name="Ureta-Vidal A."/>
            <person name="Pelletier E."/>
            <person name="Vico V."/>
            <person name="Anthouard V."/>
            <person name="Rowen L."/>
            <person name="Madan A."/>
            <person name="Qin S."/>
            <person name="Sun H."/>
            <person name="Du H."/>
            <person name="Pepin K."/>
            <person name="Artiguenave F."/>
            <person name="Robert C."/>
            <person name="Cruaud C."/>
            <person name="Bruels T."/>
            <person name="Jaillon O."/>
            <person name="Friedlander L."/>
            <person name="Samson G."/>
            <person name="Brottier P."/>
            <person name="Cure S."/>
            <person name="Segurens B."/>
            <person name="Aniere F."/>
            <person name="Samain S."/>
            <person name="Crespeau H."/>
            <person name="Abbasi N."/>
            <person name="Aiach N."/>
            <person name="Boscus D."/>
            <person name="Dickhoff R."/>
            <person name="Dors M."/>
            <person name="Dubois I."/>
            <person name="Friedman C."/>
            <person name="Gouyvenoux M."/>
            <person name="James R."/>
            <person name="Madan A."/>
            <person name="Mairey-Estrada B."/>
            <person name="Mangenot S."/>
            <person name="Martins N."/>
            <person name="Menard M."/>
            <person name="Oztas S."/>
            <person name="Ratcliffe A."/>
            <person name="Shaffer T."/>
            <person name="Trask B."/>
            <person name="Vacherie B."/>
            <person name="Bellemere C."/>
            <person name="Belser C."/>
            <person name="Besnard-Gonnet M."/>
            <person name="Bartol-Mavel D."/>
            <person name="Boutard M."/>
            <person name="Briez-Silla S."/>
            <person name="Combette S."/>
            <person name="Dufosse-Laurent V."/>
            <person name="Ferron C."/>
            <person name="Lechaplais C."/>
            <person name="Louesse C."/>
            <person name="Muselet D."/>
            <person name="Magdelenat G."/>
            <person name="Pateau E."/>
            <person name="Petit E."/>
            <person name="Sirvain-Trukniewicz P."/>
            <person name="Trybou A."/>
            <person name="Vega-Czarny N."/>
            <person name="Bataille E."/>
            <person name="Bluet E."/>
            <person name="Bordelais I."/>
            <person name="Dubois M."/>
            <person name="Dumont C."/>
            <person name="Guerin T."/>
            <person name="Haffray S."/>
            <person name="Hammadi R."/>
            <person name="Muanga J."/>
            <person name="Pellouin V."/>
            <person name="Robert D."/>
            <person name="Wunderle E."/>
            <person name="Gauguet G."/>
            <person name="Roy A."/>
            <person name="Sainte-Marthe L."/>
            <person name="Verdier J."/>
            <person name="Verdier-Discala C."/>
            <person name="Hillier L.W."/>
            <person name="Fulton L."/>
            <person name="McPherson J."/>
            <person name="Matsuda F."/>
            <person name="Wilson R."/>
            <person name="Scarpelli C."/>
            <person name="Gyapay G."/>
            <person name="Wincker P."/>
            <person name="Saurin W."/>
            <person name="Quetier F."/>
            <person name="Waterston R."/>
            <person name="Hood L."/>
            <person name="Weissenbach J."/>
        </authorList>
    </citation>
    <scope>NUCLEOTIDE SEQUENCE [LARGE SCALE GENOMIC DNA] (IMGT ALLELE IGHV3-20*02)</scope>
    <scope>VARIANT PHE-41</scope>
</reference>
<reference key="3">
    <citation type="journal article" date="2001" name="Exp. Clin. Immunogenet.">
        <title>Nomenclature of the human immunoglobulin heavy (IGH) genes.</title>
        <authorList>
            <person name="Lefranc M.P."/>
        </authorList>
    </citation>
    <scope>NOMENCLATURE</scope>
</reference>
<reference key="4">
    <citation type="book" date="2001" name="The Immunoglobulin FactsBook.">
        <title>The Immunoglobulin FactsBook.</title>
        <editorList>
            <person name="Lefranc M.P."/>
            <person name="Lefranc G."/>
        </editorList>
        <authorList>
            <person name="Lefranc M.P."/>
            <person name="Lefranc G."/>
        </authorList>
    </citation>
    <scope>NOMENCLATURE</scope>
</reference>
<reference key="5">
    <citation type="journal article" date="2007" name="Annu. Rev. Genet.">
        <title>Immunoglobulin somatic hypermutation.</title>
        <authorList>
            <person name="Teng G."/>
            <person name="Papavasiliou F.N."/>
        </authorList>
    </citation>
    <scope>REVIEW ON SOMATIC HYPERMUTATION</scope>
</reference>
<reference key="6">
    <citation type="journal article" date="2010" name="J. Allergy Clin. Immunol.">
        <title>Structure and function of immunoglobulins.</title>
        <authorList>
            <person name="Schroeder H.W. Jr."/>
            <person name="Cavacini L."/>
        </authorList>
    </citation>
    <scope>REVIEW ON IMMUNOGLOBULINS</scope>
</reference>
<reference key="7">
    <citation type="journal article" date="2012" name="Nat. Rev. Immunol.">
        <title>Molecular programming of B cell memory.</title>
        <authorList>
            <person name="McHeyzer-Williams M."/>
            <person name="Okitsu S."/>
            <person name="Wang N."/>
            <person name="McHeyzer-Williams L."/>
        </authorList>
    </citation>
    <scope>REVIEW ON FUNCTION</scope>
</reference>
<reference key="8">
    <citation type="journal article" date="2014" name="Front. Immunol.">
        <title>Immunoglobulin and T Cell Receptor Genes: IMGT((R)) and the Birth and Rise of Immunoinformatics.</title>
        <authorList>
            <person name="Lefranc M.P."/>
        </authorList>
    </citation>
    <scope>NOMENCLATURE</scope>
</reference>
<accession>A0A0C4DH32</accession>
<feature type="signal peptide" evidence="2">
    <location>
        <begin position="1"/>
        <end position="19"/>
    </location>
</feature>
<feature type="chain" id="PRO_0000439566" description="Immunoglobulin heavy variable 3-20" evidence="2">
    <location>
        <begin position="20"/>
        <end position="117"/>
    </location>
</feature>
<feature type="domain" description="Ig-like" evidence="3">
    <location>
        <begin position="20"/>
        <end position="117" status="greater than"/>
    </location>
</feature>
<feature type="region of interest" description="Framework-1" evidence="1">
    <location>
        <begin position="20"/>
        <end position="44"/>
    </location>
</feature>
<feature type="region of interest" description="Complementarity-determining-1" evidence="1">
    <location>
        <begin position="45"/>
        <end position="52"/>
    </location>
</feature>
<feature type="region of interest" description="Framework-2" evidence="1">
    <location>
        <begin position="53"/>
        <end position="69"/>
    </location>
</feature>
<feature type="region of interest" description="Complementarity-determining-2" evidence="1">
    <location>
        <begin position="70"/>
        <end position="77"/>
    </location>
</feature>
<feature type="region of interest" description="Framework-3" evidence="1">
    <location>
        <begin position="78"/>
        <end position="115"/>
    </location>
</feature>
<feature type="region of interest" description="Complementarity-determining-3" evidence="1">
    <location>
        <begin position="116"/>
        <end position="117" status="greater than"/>
    </location>
</feature>
<feature type="disulfide bond" evidence="3">
    <location>
        <begin position="41"/>
        <end position="115"/>
    </location>
</feature>
<feature type="sequence variant" id="VAR_077934" description="In IMGT allele IGHV3-20*02.">
    <original>C</original>
    <variation>F</variation>
    <location>
        <position position="41"/>
    </location>
</feature>
<feature type="non-terminal residue">
    <location>
        <position position="117"/>
    </location>
</feature>
<organism>
    <name type="scientific">Homo sapiens</name>
    <name type="common">Human</name>
    <dbReference type="NCBI Taxonomy" id="9606"/>
    <lineage>
        <taxon>Eukaryota</taxon>
        <taxon>Metazoa</taxon>
        <taxon>Chordata</taxon>
        <taxon>Craniata</taxon>
        <taxon>Vertebrata</taxon>
        <taxon>Euteleostomi</taxon>
        <taxon>Mammalia</taxon>
        <taxon>Eutheria</taxon>
        <taxon>Euarchontoglires</taxon>
        <taxon>Primates</taxon>
        <taxon>Haplorrhini</taxon>
        <taxon>Catarrhini</taxon>
        <taxon>Hominidae</taxon>
        <taxon>Homo</taxon>
    </lineage>
</organism>
<proteinExistence type="evidence at protein level"/>
<comment type="function">
    <text evidence="5 6 7 8">V region of the variable domain of immunoglobulin heavy chains that participates in the antigen recognition (PubMed:24600447). Immunoglobulins, also known as antibodies, are membrane-bound or secreted glycoproteins produced by B lymphocytes. In the recognition phase of humoral immunity, the membrane-bound immunoglobulins serve as receptors which, upon binding of a specific antigen, trigger the clonal expansion and differentiation of B lymphocytes into immunoglobulins-secreting plasma cells. Secreted immunoglobulins mediate the effector phase of humoral immunity, which results in the elimination of bound antigens (PubMed:20176268, PubMed:22158414). The antigen binding site is formed by the variable domain of one heavy chain, together with that of its associated light chain. Thus, each immunoglobulin has two antigen binding sites with remarkable affinity for a particular antigen. The variable domains are assembled by a process called V-(D)-J rearrangement and can then be subjected to somatic hypermutations which, after exposure to antigen and selection, allow affinity maturation for a particular antigen (PubMed:17576170, PubMed:20176268).</text>
</comment>
<comment type="subunit">
    <text evidence="6">Immunoglobulins are composed of two identical heavy chains and two identical light chains; disulfide-linked.</text>
</comment>
<comment type="subcellular location">
    <subcellularLocation>
        <location evidence="6 7">Secreted</location>
    </subcellularLocation>
    <subcellularLocation>
        <location evidence="6 7">Cell membrane</location>
    </subcellularLocation>
</comment>
<comment type="polymorphism">
    <text evidence="11">There are several alleles. The sequence shown is that of the functional IMGT allele IGHV3-20*01 that is not represented on the reference genome assembly (GRCh38/hg38). The sequence of the reference genome assembly (GRCh38/hg38) is that of IMGT allele IGHV3-20*02 which is considered as an open reading frame (ORF), but presents a mutation at position 41, corresponding to the first cysteine from the disulfide bridge, potentially leading to uncorrect folding.</text>
</comment>
<comment type="caution">
    <text evidence="10">For examples of full-length immunoglobulin heavy chains (of different isotypes) see AC P0DOX2, AC P0DOX3, AC P0DOX4, AC P0DOX5 and AC P0DOX6.</text>
</comment>
<protein>
    <recommendedName>
        <fullName evidence="4 9">Immunoglobulin heavy variable 3-20</fullName>
    </recommendedName>
</protein>
<sequence>MEFGLSWVFLVAILKGVQCEVQLVESGGGVVRPGGSLRLSCAASGFTFDDYGMSWVRQAPGKGLEWVSGINWNGGSTGYADSVKGRFTISRDNAKNSLYLQMNSLRAEDTALYHCAR</sequence>
<name>HV320_HUMAN</name>
<gene>
    <name evidence="4 9" type="primary">IGHV3-20</name>
</gene>
<keyword id="KW-1064">Adaptive immunity</keyword>
<keyword id="KW-1003">Cell membrane</keyword>
<keyword id="KW-1015">Disulfide bond</keyword>
<keyword id="KW-0391">Immunity</keyword>
<keyword id="KW-1280">Immunoglobulin</keyword>
<keyword id="KW-0393">Immunoglobulin domain</keyword>
<keyword id="KW-0472">Membrane</keyword>
<keyword id="KW-1267">Proteomics identification</keyword>
<keyword id="KW-1185">Reference proteome</keyword>
<keyword id="KW-0964">Secreted</keyword>
<keyword id="KW-0732">Signal</keyword>
<evidence type="ECO:0000250" key="1">
    <source>
        <dbReference type="UniProtKB" id="P23083"/>
    </source>
</evidence>
<evidence type="ECO:0000255" key="2"/>
<evidence type="ECO:0000255" key="3">
    <source>
        <dbReference type="PROSITE-ProRule" id="PRU00114"/>
    </source>
</evidence>
<evidence type="ECO:0000303" key="4">
    <source>
    </source>
</evidence>
<evidence type="ECO:0000303" key="5">
    <source>
    </source>
</evidence>
<evidence type="ECO:0000303" key="6">
    <source>
    </source>
</evidence>
<evidence type="ECO:0000303" key="7">
    <source>
    </source>
</evidence>
<evidence type="ECO:0000303" key="8">
    <source>
    </source>
</evidence>
<evidence type="ECO:0000303" key="9">
    <source ref="4"/>
</evidence>
<evidence type="ECO:0000305" key="10"/>
<evidence type="ECO:0000305" key="11">
    <source>
    </source>
</evidence>